<gene>
    <name type="primary">cpcE</name>
    <name type="ordered locus">Synpcc7942_1054</name>
</gene>
<protein>
    <recommendedName>
        <fullName>Phycocyanobilin lyase subunit alpha</fullName>
        <ecNumber>4.-.-.-</ecNumber>
    </recommendedName>
    <alternativeName>
        <fullName>Phycocyanin operon protein CpcE</fullName>
    </alternativeName>
</protein>
<name>CPCE_SYNE7</name>
<keyword id="KW-0042">Antenna complex</keyword>
<keyword id="KW-0456">Lyase</keyword>
<keyword id="KW-0605">Phycobilisome</keyword>
<keyword id="KW-1185">Reference proteome</keyword>
<evidence type="ECO:0000250" key="1"/>
<evidence type="ECO:0000305" key="2"/>
<proteinExistence type="inferred from homology"/>
<comment type="function">
    <text evidence="1">Required for the chromophorylation of the cpcA gene product.</text>
</comment>
<comment type="subunit">
    <text evidence="1">CpcE and CpcF associate to form a lyase.</text>
</comment>
<comment type="similarity">
    <text evidence="2">Belongs to the CpcE/RpcE/PecE family.</text>
</comment>
<accession>Q44115</accession>
<accession>Q31PD5</accession>
<organism>
    <name type="scientific">Synechococcus elongatus (strain ATCC 33912 / PCC 7942 / FACHB-805)</name>
    <name type="common">Anacystis nidulans R2</name>
    <dbReference type="NCBI Taxonomy" id="1140"/>
    <lineage>
        <taxon>Bacteria</taxon>
        <taxon>Bacillati</taxon>
        <taxon>Cyanobacteriota</taxon>
        <taxon>Cyanophyceae</taxon>
        <taxon>Synechococcales</taxon>
        <taxon>Synechococcaceae</taxon>
        <taxon>Synechococcus</taxon>
    </lineage>
</organism>
<sequence length="273" mass="29511">MSEAGTPAEALTYEQAIANLRQTADTGDRYYAAWWLGRFRMKQPEAIALLIEALDDSLDRAPDGGYPLRRNAARALGKLESPEAIAPLIACLQCEDYYVREAATQSLGELQATVAVPALLKLLEGGPEAIAAIPGKPHLTQPADAVMETLGQLRATVAVPVVQAFLEHPIDKIRLAAARSLYQLTGDDHYAERVVQGLSDPKLQRRRSALMDLGAIGYLPAAPQIAQTLAENSLKLISLKGLLDTHLRQQTPEAIAELDESAIALMDLMDGLL</sequence>
<feature type="chain" id="PRO_0000199271" description="Phycocyanobilin lyase subunit alpha">
    <location>
        <begin position="1"/>
        <end position="273"/>
    </location>
</feature>
<feature type="sequence conflict" description="In Ref. 1." evidence="2" ref="1">
    <original>RSALMDLGAIGYL</original>
    <variation>AVGPDGFRGDRLF</variation>
    <location>
        <begin position="207"/>
        <end position="219"/>
    </location>
</feature>
<feature type="sequence conflict" description="In Ref. 1; AAA64533." evidence="2" ref="1">
    <original>L</original>
    <variation>V</variation>
    <location>
        <position position="229"/>
    </location>
</feature>
<feature type="sequence conflict" description="In Ref. 1." evidence="2" ref="1">
    <original>AIAELDESAIALMDLMDG</original>
    <variation>RSQSWMSRQSR</variation>
    <location>
        <begin position="254"/>
        <end position="271"/>
    </location>
</feature>
<reference key="1">
    <citation type="journal article" date="1994" name="Plant Mol. Biol.">
        <title>Cloning of the cpcE and cpcF genes from Synechococcus sp. PCC 6301 and their inactivation in Synechococcus sp. PCC 7942.</title>
        <authorList>
            <person name="Bhalerao R.P."/>
            <person name="Lind L.K."/>
            <person name="Gustafsson P."/>
        </authorList>
    </citation>
    <scope>NUCLEOTIDE SEQUENCE [GENOMIC DNA]</scope>
</reference>
<reference key="2">
    <citation type="submission" date="2005-08" db="EMBL/GenBank/DDBJ databases">
        <title>Complete sequence of chromosome 1 of Synechococcus elongatus PCC 7942.</title>
        <authorList>
            <consortium name="US DOE Joint Genome Institute"/>
            <person name="Copeland A."/>
            <person name="Lucas S."/>
            <person name="Lapidus A."/>
            <person name="Barry K."/>
            <person name="Detter J.C."/>
            <person name="Glavina T."/>
            <person name="Hammon N."/>
            <person name="Israni S."/>
            <person name="Pitluck S."/>
            <person name="Schmutz J."/>
            <person name="Larimer F."/>
            <person name="Land M."/>
            <person name="Kyrpides N."/>
            <person name="Lykidis A."/>
            <person name="Golden S."/>
            <person name="Richardson P."/>
        </authorList>
    </citation>
    <scope>NUCLEOTIDE SEQUENCE [LARGE SCALE GENOMIC DNA]</scope>
    <source>
        <strain>ATCC 33912 / PCC 7942 / FACHB-805</strain>
    </source>
</reference>
<dbReference type="EC" id="4.-.-.-"/>
<dbReference type="EMBL" id="M94218">
    <property type="protein sequence ID" value="AAA64533.1"/>
    <property type="molecule type" value="Genomic_DNA"/>
</dbReference>
<dbReference type="EMBL" id="CP000100">
    <property type="protein sequence ID" value="ABB57084.1"/>
    <property type="molecule type" value="Genomic_DNA"/>
</dbReference>
<dbReference type="PIR" id="S52643">
    <property type="entry name" value="S52643"/>
</dbReference>
<dbReference type="RefSeq" id="WP_011242806.1">
    <property type="nucleotide sequence ID" value="NZ_JACJTX010000003.1"/>
</dbReference>
<dbReference type="SMR" id="Q44115"/>
<dbReference type="STRING" id="1140.Synpcc7942_1054"/>
<dbReference type="PaxDb" id="1140-Synpcc7942_1054"/>
<dbReference type="KEGG" id="syf:Synpcc7942_1054"/>
<dbReference type="eggNOG" id="COG1413">
    <property type="taxonomic scope" value="Bacteria"/>
</dbReference>
<dbReference type="HOGENOM" id="CLU_1010860_0_0_3"/>
<dbReference type="OrthoDB" id="454552at2"/>
<dbReference type="BioCyc" id="MetaCyc:SYNPCC7942_1054-MONOMER"/>
<dbReference type="BioCyc" id="SYNEL:SYNPCC7942_1054-MONOMER"/>
<dbReference type="BRENDA" id="4.4.1.32">
    <property type="organism ID" value="7781"/>
</dbReference>
<dbReference type="Proteomes" id="UP000889800">
    <property type="component" value="Chromosome"/>
</dbReference>
<dbReference type="GO" id="GO:0030089">
    <property type="term" value="C:phycobilisome"/>
    <property type="evidence" value="ECO:0007669"/>
    <property type="project" value="UniProtKB-KW"/>
</dbReference>
<dbReference type="GO" id="GO:0016829">
    <property type="term" value="F:lyase activity"/>
    <property type="evidence" value="ECO:0007669"/>
    <property type="project" value="UniProtKB-KW"/>
</dbReference>
<dbReference type="GO" id="GO:0016491">
    <property type="term" value="F:oxidoreductase activity"/>
    <property type="evidence" value="ECO:0007669"/>
    <property type="project" value="TreeGrafter"/>
</dbReference>
<dbReference type="Gene3D" id="1.25.10.10">
    <property type="entry name" value="Leucine-rich Repeat Variant"/>
    <property type="match status" value="2"/>
</dbReference>
<dbReference type="InterPro" id="IPR011989">
    <property type="entry name" value="ARM-like"/>
</dbReference>
<dbReference type="InterPro" id="IPR016024">
    <property type="entry name" value="ARM-type_fold"/>
</dbReference>
<dbReference type="InterPro" id="IPR004155">
    <property type="entry name" value="PBS_lyase_HEAT"/>
</dbReference>
<dbReference type="PANTHER" id="PTHR12697:SF5">
    <property type="entry name" value="DEOXYHYPUSINE HYDROXYLASE"/>
    <property type="match status" value="1"/>
</dbReference>
<dbReference type="PANTHER" id="PTHR12697">
    <property type="entry name" value="PBS LYASE HEAT-LIKE PROTEIN"/>
    <property type="match status" value="1"/>
</dbReference>
<dbReference type="Pfam" id="PF13646">
    <property type="entry name" value="HEAT_2"/>
    <property type="match status" value="1"/>
</dbReference>
<dbReference type="Pfam" id="PF03130">
    <property type="entry name" value="HEAT_PBS"/>
    <property type="match status" value="1"/>
</dbReference>
<dbReference type="SMART" id="SM00567">
    <property type="entry name" value="EZ_HEAT"/>
    <property type="match status" value="6"/>
</dbReference>
<dbReference type="SUPFAM" id="SSF48371">
    <property type="entry name" value="ARM repeat"/>
    <property type="match status" value="2"/>
</dbReference>